<name>KRFB_CHICK</name>
<reference key="1">
    <citation type="journal article" date="1984" name="EMBO J.">
        <title>A comparison of genomic coding sequences for feather and scale keratins: structural and evolutionary implications.</title>
        <authorList>
            <person name="Gregg K."/>
            <person name="Wilton S.D."/>
            <person name="Parry D.A.D."/>
            <person name="Rogers G.E."/>
        </authorList>
    </citation>
    <scope>NUCLEOTIDE SEQUENCE [GENOMIC DNA]</scope>
</reference>
<reference key="2">
    <citation type="journal article" date="1989" name="J. Mol. Biol.">
        <title>Avian keratin genes. I. A molecular analysis of the structure and expression of a group of feather keratin genes.</title>
        <authorList>
            <person name="Presland R.B."/>
            <person name="Gregg K."/>
            <person name="Molloy P.L."/>
            <person name="Morris C.P."/>
            <person name="Crocker L.A."/>
            <person name="Rogers G.E."/>
        </authorList>
    </citation>
    <scope>NUCLEOTIDE SEQUENCE [GENOMIC DNA]</scope>
</reference>
<feature type="initiator methionine" description="Removed" evidence="1">
    <location>
        <position position="1"/>
    </location>
</feature>
<feature type="chain" id="PRO_0000096998" description="Feather keratin 2">
    <location>
        <begin position="2"/>
        <end position="98"/>
    </location>
</feature>
<feature type="modified residue" description="N-acetylserine" evidence="1">
    <location>
        <position position="2"/>
    </location>
</feature>
<feature type="sequence conflict" description="In Ref. 1; CAA25085." evidence="2" ref="1">
    <original>E</original>
    <variation>Q</variation>
    <location>
        <position position="71"/>
    </location>
</feature>
<accession>P04458</accession>
<sequence>MSCYDLCRPCGPTPLANSCNEPCVRQCQDSRVVIQPSPVVVTLPGPILSSFPQNTAVGSSTSAAVGSILSEEGVPISCGGFGISGLGSRFSGRRCLPC</sequence>
<dbReference type="EMBL" id="X00316">
    <property type="protein sequence ID" value="CAA25085.1"/>
    <property type="molecule type" value="Genomic_DNA"/>
</dbReference>
<dbReference type="PIR" id="A02849">
    <property type="entry name" value="KRCHF2"/>
</dbReference>
<dbReference type="PIR" id="S06807">
    <property type="entry name" value="S06807"/>
</dbReference>
<dbReference type="STRING" id="9031.ENSGALP00000041895"/>
<dbReference type="GlyGen" id="P04458">
    <property type="glycosylation" value="1 site"/>
</dbReference>
<dbReference type="PaxDb" id="9031-ENSGALP00000039993"/>
<dbReference type="VEuPathDB" id="HostDB:LOC428291"/>
<dbReference type="eggNOG" id="ENOG502TDE8">
    <property type="taxonomic scope" value="Eukaryota"/>
</dbReference>
<dbReference type="InParanoid" id="P04458"/>
<dbReference type="PhylomeDB" id="P04458"/>
<dbReference type="Proteomes" id="UP000000539">
    <property type="component" value="Unassembled WGS sequence"/>
</dbReference>
<dbReference type="GO" id="GO:0005882">
    <property type="term" value="C:intermediate filament"/>
    <property type="evidence" value="ECO:0007669"/>
    <property type="project" value="UniProtKB-KW"/>
</dbReference>
<dbReference type="GO" id="GO:0005200">
    <property type="term" value="F:structural constituent of cytoskeleton"/>
    <property type="evidence" value="ECO:0007669"/>
    <property type="project" value="InterPro"/>
</dbReference>
<dbReference type="InterPro" id="IPR003461">
    <property type="entry name" value="Keratin"/>
</dbReference>
<dbReference type="PANTHER" id="PTHR31203">
    <property type="entry name" value="BETA-KERATIN-RELATED PROTEIN-RELATED"/>
    <property type="match status" value="1"/>
</dbReference>
<dbReference type="PANTHER" id="PTHR31203:SF1">
    <property type="entry name" value="BETA-KERATIN-RELATED PROTEIN-RELATED"/>
    <property type="match status" value="1"/>
</dbReference>
<dbReference type="Pfam" id="PF02422">
    <property type="entry name" value="Keratin"/>
    <property type="match status" value="1"/>
</dbReference>
<proteinExistence type="inferred from homology"/>
<evidence type="ECO:0000250" key="1"/>
<evidence type="ECO:0000305" key="2"/>
<protein>
    <recommendedName>
        <fullName>Feather keratin 2</fullName>
    </recommendedName>
    <alternativeName>
        <fullName>F-ker</fullName>
    </alternativeName>
    <alternativeName>
        <fullName>Keratin gene B protein</fullName>
    </alternativeName>
</protein>
<organism>
    <name type="scientific">Gallus gallus</name>
    <name type="common">Chicken</name>
    <dbReference type="NCBI Taxonomy" id="9031"/>
    <lineage>
        <taxon>Eukaryota</taxon>
        <taxon>Metazoa</taxon>
        <taxon>Chordata</taxon>
        <taxon>Craniata</taxon>
        <taxon>Vertebrata</taxon>
        <taxon>Euteleostomi</taxon>
        <taxon>Archelosauria</taxon>
        <taxon>Archosauria</taxon>
        <taxon>Dinosauria</taxon>
        <taxon>Saurischia</taxon>
        <taxon>Theropoda</taxon>
        <taxon>Coelurosauria</taxon>
        <taxon>Aves</taxon>
        <taxon>Neognathae</taxon>
        <taxon>Galloanserae</taxon>
        <taxon>Galliformes</taxon>
        <taxon>Phasianidae</taxon>
        <taxon>Phasianinae</taxon>
        <taxon>Gallus</taxon>
    </lineage>
</organism>
<keyword id="KW-0007">Acetylation</keyword>
<keyword id="KW-0416">Keratin</keyword>
<keyword id="KW-1185">Reference proteome</keyword>
<comment type="subunit">
    <text>The avian keratins (F-ker, S-ker, C-ker and B-ker) are a complex mixture of very similar polypeptides.</text>
</comment>
<comment type="similarity">
    <text evidence="2">Belongs to the avian keratin family.</text>
</comment>